<protein>
    <recommendedName>
        <fullName>Dicer-like protein 2</fullName>
    </recommendedName>
    <domain>
        <recommendedName>
            <fullName>Endoribonuclease dcl2</fullName>
            <ecNumber>3.1.26.-</ecNumber>
        </recommendedName>
    </domain>
    <domain>
        <recommendedName>
            <fullName>ATP-dependent helicase dcl2</fullName>
            <ecNumber>3.6.4.-</ecNumber>
        </recommendedName>
    </domain>
</protein>
<sequence length="1388" mass="156430">MASSVTACQGASPYQPRNYQLEMLEASMKENIIVAMDTGSGKTHIAVLRIKAELDICPPDKLVWFLAPTVALCIQQHEVIASNLPAVRTRTLTGLDKVELWTEQSIWDAVLNGYRVIVSTHAVLADALSHGFVKMSRLALLIFDEAHHCTRRHAANKIMRDFYHPTLTKSGPGAVPRIMGLTASPVVRSNHQELLTVESNLDAVCRTPRVHRQELVKFTHRPHLQQIWYTPTDPAGFKSASQTLGALYHAWETLDIGDDPYIQRLRKSPLDDTALKKALLTGKTYCREQLRRFVDRSRHIFEELGEWAAEYYIYASIKQLGDRVRNSYMSGDWDEAEKAYLVDFLSKIPASEIQLALNDPGSFRISPKFESLLNFLDSLDEREFSGLIFVKQRATVSAMTSLLSVHPCTRERFRCAAYVGWSNGSASKDILGDLLNMQLQRDTLDDFRSGRKNLIIATDVLEEGIDISACSVVVCYDKPPNLKSFVQRRGRARRKQSTFAIMFPTDDASADVSKWQDLEQAMIEAYQDDERQLQSVSALESLDEEVMERLTVESTSAVLTADMAMAHLHHFCAVLPPQPYADMRPVFSFETNEDGLLKGTVILPSCVHPKVRRTEGRRWWRTERAAMKETAFQAYKALYEFGLVNDHLLPLTKRPELKSHDLGAMPSILETSEQYDPWIEWAYSWSSPDIHQSRIVVRMNEGRGDELCMRLMGPTYLPPLSPMTLFWNNSTTFTVTFEAAERVPLVPLSSVEDMRAITALYLKATNSRVCSSERDFTALFAPDLHHTELKGWLNAYEGCDPAMEVYSRGHNPLLMGVVRDHSRYGEPFLFRKWLVSDQNPSCSVVELECAPFPHRRNLLHRQRLANSQVDVDEETPESAAKNPIVAADACTIDRLPFTMAIFGLFISAIVERLETELIATRLRETILRDVGFKSTDHIITAISTPFAHALTNYQRYEFLGDSILKFSVSCQLFFQHPNWHEGYLSEGRAMIVQNPRLAKAALDTGLDAYIVTKRIASRKWSAPLISEKLERVPAKRQMSTKVLADVVEALIGAAYMDGGHATAQACIRRLLPEINLHAVDTRTATRSVAPESARHMMNERLKDHIGYTFEDESLLVEALTHPSCDYDSTTQSYQRLEYLGDAVLDMVIVSAIFNHPIQRPQGDMTKIKHAVVNANLLAFLCMESATSEEKLDVAQTSKDSFAVTTSQESVELWRFMRYRGQNLNAARDASLARHRALRDEIASSLLHAPHYPWHALSRLNADKFFSDIVESVLGAIFVDSGGDLAPCEVFVERIGLMAYLRRILDQEIDVRHPRSVAQQLAKTNIQFVLQRVPNEEGGASYQCSVRIEQAELFVVTGCLTAEEAEVTAAVEAIKFLTRDEGSTPLNTS</sequence>
<dbReference type="EC" id="3.1.26.-"/>
<dbReference type="EC" id="3.6.4.-"/>
<dbReference type="EMBL" id="DS027693">
    <property type="protein sequence ID" value="EAW20627.1"/>
    <property type="molecule type" value="Genomic_DNA"/>
</dbReference>
<dbReference type="RefSeq" id="XP_001262524.1">
    <property type="nucleotide sequence ID" value="XM_001262523.1"/>
</dbReference>
<dbReference type="SMR" id="A1D9Z6"/>
<dbReference type="STRING" id="331117.A1D9Z6"/>
<dbReference type="EnsemblFungi" id="EAW20627">
    <property type="protein sequence ID" value="EAW20627"/>
    <property type="gene ID" value="NFIA_030600"/>
</dbReference>
<dbReference type="GeneID" id="4589127"/>
<dbReference type="KEGG" id="nfi:NFIA_030600"/>
<dbReference type="VEuPathDB" id="FungiDB:NFIA_030600"/>
<dbReference type="eggNOG" id="KOG0701">
    <property type="taxonomic scope" value="Eukaryota"/>
</dbReference>
<dbReference type="HOGENOM" id="CLU_000907_4_6_1"/>
<dbReference type="OMA" id="CCVNLIR"/>
<dbReference type="OrthoDB" id="416741at2759"/>
<dbReference type="Proteomes" id="UP000006702">
    <property type="component" value="Unassembled WGS sequence"/>
</dbReference>
<dbReference type="GO" id="GO:0005737">
    <property type="term" value="C:cytoplasm"/>
    <property type="evidence" value="ECO:0007669"/>
    <property type="project" value="TreeGrafter"/>
</dbReference>
<dbReference type="GO" id="GO:0005634">
    <property type="term" value="C:nucleus"/>
    <property type="evidence" value="ECO:0007669"/>
    <property type="project" value="TreeGrafter"/>
</dbReference>
<dbReference type="GO" id="GO:0005524">
    <property type="term" value="F:ATP binding"/>
    <property type="evidence" value="ECO:0007669"/>
    <property type="project" value="UniProtKB-KW"/>
</dbReference>
<dbReference type="GO" id="GO:0004386">
    <property type="term" value="F:helicase activity"/>
    <property type="evidence" value="ECO:0007669"/>
    <property type="project" value="UniProtKB-KW"/>
</dbReference>
<dbReference type="GO" id="GO:0046872">
    <property type="term" value="F:metal ion binding"/>
    <property type="evidence" value="ECO:0007669"/>
    <property type="project" value="UniProtKB-KW"/>
</dbReference>
<dbReference type="GO" id="GO:0004525">
    <property type="term" value="F:ribonuclease III activity"/>
    <property type="evidence" value="ECO:0007669"/>
    <property type="project" value="InterPro"/>
</dbReference>
<dbReference type="GO" id="GO:0003723">
    <property type="term" value="F:RNA binding"/>
    <property type="evidence" value="ECO:0007669"/>
    <property type="project" value="UniProtKB-KW"/>
</dbReference>
<dbReference type="GO" id="GO:0051607">
    <property type="term" value="P:defense response to virus"/>
    <property type="evidence" value="ECO:0007669"/>
    <property type="project" value="UniProtKB-KW"/>
</dbReference>
<dbReference type="GO" id="GO:0050688">
    <property type="term" value="P:regulation of defense response to virus"/>
    <property type="evidence" value="ECO:0007669"/>
    <property type="project" value="UniProtKB-KW"/>
</dbReference>
<dbReference type="GO" id="GO:0030422">
    <property type="term" value="P:siRNA processing"/>
    <property type="evidence" value="ECO:0007669"/>
    <property type="project" value="TreeGrafter"/>
</dbReference>
<dbReference type="CDD" id="cd18034">
    <property type="entry name" value="DEXHc_dicer"/>
    <property type="match status" value="1"/>
</dbReference>
<dbReference type="CDD" id="cd00593">
    <property type="entry name" value="RIBOc"/>
    <property type="match status" value="2"/>
</dbReference>
<dbReference type="CDD" id="cd18802">
    <property type="entry name" value="SF2_C_dicer"/>
    <property type="match status" value="1"/>
</dbReference>
<dbReference type="FunFam" id="1.10.1520.10:FF:000015">
    <property type="entry name" value="Dicer-like protein 1"/>
    <property type="match status" value="1"/>
</dbReference>
<dbReference type="FunFam" id="3.40.50.300:FF:001669">
    <property type="entry name" value="Dicer-like protein 1"/>
    <property type="match status" value="1"/>
</dbReference>
<dbReference type="FunFam" id="1.10.1520.10:FF:000032">
    <property type="entry name" value="Dicer-like protein 2"/>
    <property type="match status" value="1"/>
</dbReference>
<dbReference type="FunFam" id="3.30.160.380:FF:000005">
    <property type="entry name" value="Dicer-like protein 2"/>
    <property type="match status" value="1"/>
</dbReference>
<dbReference type="FunFam" id="3.40.50.300:FF:002480">
    <property type="entry name" value="Dicer-like protein 2"/>
    <property type="match status" value="1"/>
</dbReference>
<dbReference type="Gene3D" id="3.30.160.380">
    <property type="entry name" value="Dicer dimerisation domain"/>
    <property type="match status" value="1"/>
</dbReference>
<dbReference type="Gene3D" id="3.40.50.300">
    <property type="entry name" value="P-loop containing nucleotide triphosphate hydrolases"/>
    <property type="match status" value="2"/>
</dbReference>
<dbReference type="Gene3D" id="1.10.1520.10">
    <property type="entry name" value="Ribonuclease III domain"/>
    <property type="match status" value="2"/>
</dbReference>
<dbReference type="InterPro" id="IPR011545">
    <property type="entry name" value="DEAD/DEAH_box_helicase_dom"/>
</dbReference>
<dbReference type="InterPro" id="IPR038248">
    <property type="entry name" value="Dicer_dimer_sf"/>
</dbReference>
<dbReference type="InterPro" id="IPR005034">
    <property type="entry name" value="Dicer_dimerisation_dom"/>
</dbReference>
<dbReference type="InterPro" id="IPR014001">
    <property type="entry name" value="Helicase_ATP-bd"/>
</dbReference>
<dbReference type="InterPro" id="IPR001650">
    <property type="entry name" value="Helicase_C-like"/>
</dbReference>
<dbReference type="InterPro" id="IPR027417">
    <property type="entry name" value="P-loop_NTPase"/>
</dbReference>
<dbReference type="InterPro" id="IPR000999">
    <property type="entry name" value="RNase_III_dom"/>
</dbReference>
<dbReference type="InterPro" id="IPR036389">
    <property type="entry name" value="RNase_III_sf"/>
</dbReference>
<dbReference type="PANTHER" id="PTHR14950">
    <property type="entry name" value="DICER-RELATED"/>
    <property type="match status" value="1"/>
</dbReference>
<dbReference type="PANTHER" id="PTHR14950:SF37">
    <property type="entry name" value="ENDORIBONUCLEASE DICER"/>
    <property type="match status" value="1"/>
</dbReference>
<dbReference type="Pfam" id="PF00270">
    <property type="entry name" value="DEAD"/>
    <property type="match status" value="1"/>
</dbReference>
<dbReference type="Pfam" id="PF03368">
    <property type="entry name" value="Dicer_dimer"/>
    <property type="match status" value="1"/>
</dbReference>
<dbReference type="Pfam" id="PF00271">
    <property type="entry name" value="Helicase_C"/>
    <property type="match status" value="1"/>
</dbReference>
<dbReference type="Pfam" id="PF00636">
    <property type="entry name" value="Ribonuclease_3"/>
    <property type="match status" value="2"/>
</dbReference>
<dbReference type="SMART" id="SM00487">
    <property type="entry name" value="DEXDc"/>
    <property type="match status" value="1"/>
</dbReference>
<dbReference type="SMART" id="SM00490">
    <property type="entry name" value="HELICc"/>
    <property type="match status" value="1"/>
</dbReference>
<dbReference type="SMART" id="SM00535">
    <property type="entry name" value="RIBOc"/>
    <property type="match status" value="2"/>
</dbReference>
<dbReference type="SUPFAM" id="SSF52540">
    <property type="entry name" value="P-loop containing nucleoside triphosphate hydrolases"/>
    <property type="match status" value="1"/>
</dbReference>
<dbReference type="SUPFAM" id="SSF69065">
    <property type="entry name" value="RNase III domain-like"/>
    <property type="match status" value="2"/>
</dbReference>
<dbReference type="PROSITE" id="PS51327">
    <property type="entry name" value="DICER_DSRBF"/>
    <property type="match status" value="1"/>
</dbReference>
<dbReference type="PROSITE" id="PS51192">
    <property type="entry name" value="HELICASE_ATP_BIND_1"/>
    <property type="match status" value="1"/>
</dbReference>
<dbReference type="PROSITE" id="PS51194">
    <property type="entry name" value="HELICASE_CTER"/>
    <property type="match status" value="1"/>
</dbReference>
<dbReference type="PROSITE" id="PS00517">
    <property type="entry name" value="RNASE_3_1"/>
    <property type="match status" value="1"/>
</dbReference>
<dbReference type="PROSITE" id="PS50142">
    <property type="entry name" value="RNASE_3_2"/>
    <property type="match status" value="2"/>
</dbReference>
<comment type="function">
    <text evidence="1">Dicer-like endonuclease involved in cleaving double-stranded RNA in the RNA interference (RNAi) pathway. Produces 21 to 25 bp dsRNAs (siRNAs) which target the selective destruction of homologous RNAs leading to sequence-specific suppression of gene expression, called post-transcriptional gene silencing (PTGS). Part of a broad host defense response against viral infection and transposons (By similarity).</text>
</comment>
<comment type="cofactor">
    <cofactor evidence="1">
        <name>Mg(2+)</name>
        <dbReference type="ChEBI" id="CHEBI:18420"/>
    </cofactor>
    <cofactor evidence="1">
        <name>Mn(2+)</name>
        <dbReference type="ChEBI" id="CHEBI:29035"/>
    </cofactor>
</comment>
<comment type="similarity">
    <text evidence="5">Belongs to the helicase family. Dicer subfamily.</text>
</comment>
<accession>A1D9Z6</accession>
<feature type="chain" id="PRO_0000306795" description="Dicer-like protein 2">
    <location>
        <begin position="1"/>
        <end position="1388"/>
    </location>
</feature>
<feature type="domain" description="Helicase ATP-binding" evidence="3">
    <location>
        <begin position="23"/>
        <end position="203"/>
    </location>
</feature>
<feature type="domain" description="Helicase C-terminal" evidence="4">
    <location>
        <begin position="371"/>
        <end position="537"/>
    </location>
</feature>
<feature type="domain" description="Dicer dsRNA-binding fold" evidence="5">
    <location>
        <begin position="564"/>
        <end position="658"/>
    </location>
</feature>
<feature type="domain" description="RNase III 1" evidence="2">
    <location>
        <begin position="919"/>
        <end position="1059"/>
    </location>
</feature>
<feature type="domain" description="RNase III 2" evidence="2">
    <location>
        <begin position="1098"/>
        <end position="1281"/>
    </location>
</feature>
<feature type="short sequence motif" description="DEAH box">
    <location>
        <begin position="144"/>
        <end position="147"/>
    </location>
</feature>
<feature type="binding site" evidence="3">
    <location>
        <begin position="36"/>
        <end position="43"/>
    </location>
    <ligand>
        <name>ATP</name>
        <dbReference type="ChEBI" id="CHEBI:30616"/>
    </ligand>
</feature>
<feature type="binding site" evidence="1">
    <location>
        <position position="1137"/>
    </location>
    <ligand>
        <name>Mg(2+)</name>
        <dbReference type="ChEBI" id="CHEBI:18420"/>
    </ligand>
</feature>
<feature type="binding site" evidence="1">
    <location>
        <position position="1267"/>
    </location>
    <ligand>
        <name>Mg(2+)</name>
        <dbReference type="ChEBI" id="CHEBI:18420"/>
    </ligand>
</feature>
<feature type="binding site" evidence="1">
    <location>
        <position position="1270"/>
    </location>
    <ligand>
        <name>Mg(2+)</name>
        <dbReference type="ChEBI" id="CHEBI:18420"/>
    </ligand>
</feature>
<feature type="site" description="Important for activity" evidence="1">
    <location>
        <position position="1263"/>
    </location>
</feature>
<evidence type="ECO:0000250" key="1"/>
<evidence type="ECO:0000255" key="2">
    <source>
        <dbReference type="PROSITE-ProRule" id="PRU00177"/>
    </source>
</evidence>
<evidence type="ECO:0000255" key="3">
    <source>
        <dbReference type="PROSITE-ProRule" id="PRU00541"/>
    </source>
</evidence>
<evidence type="ECO:0000255" key="4">
    <source>
        <dbReference type="PROSITE-ProRule" id="PRU00542"/>
    </source>
</evidence>
<evidence type="ECO:0000255" key="5">
    <source>
        <dbReference type="PROSITE-ProRule" id="PRU00657"/>
    </source>
</evidence>
<name>DCL2_NEOFI</name>
<keyword id="KW-0051">Antiviral defense</keyword>
<keyword id="KW-0930">Antiviral protein</keyword>
<keyword id="KW-0067">ATP-binding</keyword>
<keyword id="KW-0347">Helicase</keyword>
<keyword id="KW-0378">Hydrolase</keyword>
<keyword id="KW-0460">Magnesium</keyword>
<keyword id="KW-0464">Manganese</keyword>
<keyword id="KW-0479">Metal-binding</keyword>
<keyword id="KW-0547">Nucleotide-binding</keyword>
<keyword id="KW-1185">Reference proteome</keyword>
<keyword id="KW-0677">Repeat</keyword>
<keyword id="KW-0694">RNA-binding</keyword>
<organism>
    <name type="scientific">Neosartorya fischeri (strain ATCC 1020 / DSM 3700 / CBS 544.65 / FGSC A1164 / JCM 1740 / NRRL 181 / WB 181)</name>
    <name type="common">Aspergillus fischerianus</name>
    <dbReference type="NCBI Taxonomy" id="331117"/>
    <lineage>
        <taxon>Eukaryota</taxon>
        <taxon>Fungi</taxon>
        <taxon>Dikarya</taxon>
        <taxon>Ascomycota</taxon>
        <taxon>Pezizomycotina</taxon>
        <taxon>Eurotiomycetes</taxon>
        <taxon>Eurotiomycetidae</taxon>
        <taxon>Eurotiales</taxon>
        <taxon>Aspergillaceae</taxon>
        <taxon>Aspergillus</taxon>
        <taxon>Aspergillus subgen. Fumigati</taxon>
    </lineage>
</organism>
<proteinExistence type="inferred from homology"/>
<reference key="1">
    <citation type="journal article" date="2008" name="PLoS Genet.">
        <title>Genomic islands in the pathogenic filamentous fungus Aspergillus fumigatus.</title>
        <authorList>
            <person name="Fedorova N.D."/>
            <person name="Khaldi N."/>
            <person name="Joardar V.S."/>
            <person name="Maiti R."/>
            <person name="Amedeo P."/>
            <person name="Anderson M.J."/>
            <person name="Crabtree J."/>
            <person name="Silva J.C."/>
            <person name="Badger J.H."/>
            <person name="Albarraq A."/>
            <person name="Angiuoli S."/>
            <person name="Bussey H."/>
            <person name="Bowyer P."/>
            <person name="Cotty P.J."/>
            <person name="Dyer P.S."/>
            <person name="Egan A."/>
            <person name="Galens K."/>
            <person name="Fraser-Liggett C.M."/>
            <person name="Haas B.J."/>
            <person name="Inman J.M."/>
            <person name="Kent R."/>
            <person name="Lemieux S."/>
            <person name="Malavazi I."/>
            <person name="Orvis J."/>
            <person name="Roemer T."/>
            <person name="Ronning C.M."/>
            <person name="Sundaram J.P."/>
            <person name="Sutton G."/>
            <person name="Turner G."/>
            <person name="Venter J.C."/>
            <person name="White O.R."/>
            <person name="Whitty B.R."/>
            <person name="Youngman P."/>
            <person name="Wolfe K.H."/>
            <person name="Goldman G.H."/>
            <person name="Wortman J.R."/>
            <person name="Jiang B."/>
            <person name="Denning D.W."/>
            <person name="Nierman W.C."/>
        </authorList>
    </citation>
    <scope>NUCLEOTIDE SEQUENCE [LARGE SCALE GENOMIC DNA]</scope>
    <source>
        <strain>ATCC 1020 / DSM 3700 / CBS 544.65 / FGSC A1164 / JCM 1740 / NRRL 181 / WB 181</strain>
    </source>
</reference>
<gene>
    <name type="primary">dcl2</name>
    <name type="ORF">NFIA_030600</name>
</gene>